<accession>Q6FTM0</accession>
<sequence length="652" mass="74823">MINRLIQRIVPFSRPLSTVKKTMLTPFLESKRPQQSPEYDYSTLSNYKSFQIKHTTLNFLLSFEKSTVSGDVVFDLTTLKEAVKHIDLDTSYLDVNEVLVDDKPVEFKIEERKQPLGSKLVIAAELEAERQFKLRVKFSTTKDCTALQWLTPQQTSGDKPYMFSQLEAIHARALFPCFDTPSYKSTFTANIESTLPVVFSGIATGSTPNGESTVYHFKQDIPIPAYLVGIASGDLVSASIGPRSKVYTEPHRLDDCVWEFSNDVEKFIKTAENLIFDYEWGTYDILVNVDSYPYGGMESPNMTFATPTLIAHDKTNIDVIAHELAHSWSGNLVTNCSWNHFWLNEGWTVYIERRIVGALHGEPTRHFSALIGWSDLENSINSMRNPEKFSTLVQNLNDGTDPDDAFSTVPYEKGFNLLFHLETVLGGPQEFDPFIRHYFKKFARQSLDTFQFLDTLFEFFENKREILENVDWETWLFKPGMPPKPQFITTMADNVFSLVNKWIVKAQELKTTEEFSKEFSESDLSEFNSNQVVLFLEELVAQNCVPVESKIEWSKYSVASESLLSIYKKQVTESQNAEVVFKNYKFQTTARIQPSYQQLANWLGTVGRMKFVRPGYRLLNAVDRDLAIATFEKLKDTYHPICKQLVKQDLEL</sequence>
<protein>
    <recommendedName>
        <fullName>Leucine aminopeptidase 2</fullName>
        <ecNumber>3.4.11.-</ecNumber>
    </recommendedName>
    <alternativeName>
        <fullName>Epoxide hydrolase</fullName>
        <ecNumber>3.3.2.10</ecNumber>
    </alternativeName>
    <alternativeName>
        <fullName>Leukotriene A-4 hydrolase homolog</fullName>
        <shortName>LTA-4 hydrolase</shortName>
    </alternativeName>
</protein>
<reference key="1">
    <citation type="journal article" date="2004" name="Nature">
        <title>Genome evolution in yeasts.</title>
        <authorList>
            <person name="Dujon B."/>
            <person name="Sherman D."/>
            <person name="Fischer G."/>
            <person name="Durrens P."/>
            <person name="Casaregola S."/>
            <person name="Lafontaine I."/>
            <person name="de Montigny J."/>
            <person name="Marck C."/>
            <person name="Neuveglise C."/>
            <person name="Talla E."/>
            <person name="Goffard N."/>
            <person name="Frangeul L."/>
            <person name="Aigle M."/>
            <person name="Anthouard V."/>
            <person name="Babour A."/>
            <person name="Barbe V."/>
            <person name="Barnay S."/>
            <person name="Blanchin S."/>
            <person name="Beckerich J.-M."/>
            <person name="Beyne E."/>
            <person name="Bleykasten C."/>
            <person name="Boisrame A."/>
            <person name="Boyer J."/>
            <person name="Cattolico L."/>
            <person name="Confanioleri F."/>
            <person name="de Daruvar A."/>
            <person name="Despons L."/>
            <person name="Fabre E."/>
            <person name="Fairhead C."/>
            <person name="Ferry-Dumazet H."/>
            <person name="Groppi A."/>
            <person name="Hantraye F."/>
            <person name="Hennequin C."/>
            <person name="Jauniaux N."/>
            <person name="Joyet P."/>
            <person name="Kachouri R."/>
            <person name="Kerrest A."/>
            <person name="Koszul R."/>
            <person name="Lemaire M."/>
            <person name="Lesur I."/>
            <person name="Ma L."/>
            <person name="Muller H."/>
            <person name="Nicaud J.-M."/>
            <person name="Nikolski M."/>
            <person name="Oztas S."/>
            <person name="Ozier-Kalogeropoulos O."/>
            <person name="Pellenz S."/>
            <person name="Potier S."/>
            <person name="Richard G.-F."/>
            <person name="Straub M.-L."/>
            <person name="Suleau A."/>
            <person name="Swennen D."/>
            <person name="Tekaia F."/>
            <person name="Wesolowski-Louvel M."/>
            <person name="Westhof E."/>
            <person name="Wirth B."/>
            <person name="Zeniou-Meyer M."/>
            <person name="Zivanovic Y."/>
            <person name="Bolotin-Fukuhara M."/>
            <person name="Thierry A."/>
            <person name="Bouchier C."/>
            <person name="Caudron B."/>
            <person name="Scarpelli C."/>
            <person name="Gaillardin C."/>
            <person name="Weissenbach J."/>
            <person name="Wincker P."/>
            <person name="Souciet J.-L."/>
        </authorList>
    </citation>
    <scope>NUCLEOTIDE SEQUENCE [LARGE SCALE GENOMIC DNA]</scope>
    <source>
        <strain>ATCC 2001 / BCRC 20586 / JCM 3761 / NBRC 0622 / NRRL Y-65 / CBS 138</strain>
    </source>
</reference>
<comment type="function">
    <text evidence="2">Aminopeptidase that preferentially cleaves di- and tripeptides. Also has low epoxide hydrolase activity (in vitro). Can hydrolyze the epoxide leukotriene LTA(4) but it forms preferentially 5,6-dihydroxy-7,9,11,14-eicosatetraenoic acid rather than the cytokine leukotriene B(4) as the product compared to the homologous mammalian enzyme (in vitro).</text>
</comment>
<comment type="catalytic activity">
    <reaction evidence="2">
        <text>an epoxide + H2O = an ethanediol</text>
        <dbReference type="Rhea" id="RHEA:19037"/>
        <dbReference type="ChEBI" id="CHEBI:15377"/>
        <dbReference type="ChEBI" id="CHEBI:32955"/>
        <dbReference type="ChEBI" id="CHEBI:140594"/>
        <dbReference type="EC" id="3.3.2.10"/>
    </reaction>
</comment>
<comment type="cofactor">
    <cofactor evidence="2">
        <name>Zn(2+)</name>
        <dbReference type="ChEBI" id="CHEBI:29105"/>
    </cofactor>
    <text evidence="2">Binds 1 zinc ion per subunit.</text>
</comment>
<comment type="subcellular location">
    <subcellularLocation>
        <location evidence="2">Cytoplasm</location>
    </subcellularLocation>
    <subcellularLocation>
        <location evidence="2">Nucleus</location>
    </subcellularLocation>
</comment>
<comment type="similarity">
    <text evidence="4">Belongs to the peptidase M1 family.</text>
</comment>
<proteinExistence type="inferred from homology"/>
<gene>
    <name type="ordered locus">CAGL0G01430g</name>
</gene>
<keyword id="KW-0963">Cytoplasm</keyword>
<keyword id="KW-0378">Hydrolase</keyword>
<keyword id="KW-0479">Metal-binding</keyword>
<keyword id="KW-0482">Metalloprotease</keyword>
<keyword id="KW-0539">Nucleus</keyword>
<keyword id="KW-0645">Protease</keyword>
<keyword id="KW-1185">Reference proteome</keyword>
<keyword id="KW-0862">Zinc</keyword>
<name>LKHA4_CANGA</name>
<organism>
    <name type="scientific">Candida glabrata (strain ATCC 2001 / BCRC 20586 / JCM 3761 / NBRC 0622 / NRRL Y-65 / CBS 138)</name>
    <name type="common">Yeast</name>
    <name type="synonym">Nakaseomyces glabratus</name>
    <dbReference type="NCBI Taxonomy" id="284593"/>
    <lineage>
        <taxon>Eukaryota</taxon>
        <taxon>Fungi</taxon>
        <taxon>Dikarya</taxon>
        <taxon>Ascomycota</taxon>
        <taxon>Saccharomycotina</taxon>
        <taxon>Saccharomycetes</taxon>
        <taxon>Saccharomycetales</taxon>
        <taxon>Saccharomycetaceae</taxon>
        <taxon>Nakaseomyces</taxon>
    </lineage>
</organism>
<dbReference type="EC" id="3.4.11.-"/>
<dbReference type="EC" id="3.3.2.10"/>
<dbReference type="EMBL" id="CR380953">
    <property type="protein sequence ID" value="CAG59351.1"/>
    <property type="molecule type" value="Genomic_DNA"/>
</dbReference>
<dbReference type="RefSeq" id="XP_446424.1">
    <property type="nucleotide sequence ID" value="XM_446424.1"/>
</dbReference>
<dbReference type="SMR" id="Q6FTM0"/>
<dbReference type="FunCoup" id="Q6FTM0">
    <property type="interactions" value="1102"/>
</dbReference>
<dbReference type="STRING" id="284593.Q6FTM0"/>
<dbReference type="MEROPS" id="M01.034"/>
<dbReference type="EnsemblFungi" id="CAGL0G01430g-T">
    <property type="protein sequence ID" value="CAGL0G01430g-T-p1"/>
    <property type="gene ID" value="CAGL0G01430g"/>
</dbReference>
<dbReference type="KEGG" id="cgr:2888012"/>
<dbReference type="CGD" id="CAL0129700">
    <property type="gene designation" value="CAGL0G01430g"/>
</dbReference>
<dbReference type="VEuPathDB" id="FungiDB:CAGL0G01430g"/>
<dbReference type="eggNOG" id="KOG1047">
    <property type="taxonomic scope" value="Eukaryota"/>
</dbReference>
<dbReference type="HOGENOM" id="CLU_014505_1_1_1"/>
<dbReference type="InParanoid" id="Q6FTM0"/>
<dbReference type="Proteomes" id="UP000002428">
    <property type="component" value="Chromosome G"/>
</dbReference>
<dbReference type="GO" id="GO:0005829">
    <property type="term" value="C:cytosol"/>
    <property type="evidence" value="ECO:0007669"/>
    <property type="project" value="TreeGrafter"/>
</dbReference>
<dbReference type="GO" id="GO:0000328">
    <property type="term" value="C:fungal-type vacuole lumen"/>
    <property type="evidence" value="ECO:0007669"/>
    <property type="project" value="EnsemblFungi"/>
</dbReference>
<dbReference type="GO" id="GO:0005771">
    <property type="term" value="C:multivesicular body"/>
    <property type="evidence" value="ECO:0007669"/>
    <property type="project" value="EnsemblFungi"/>
</dbReference>
<dbReference type="GO" id="GO:0005634">
    <property type="term" value="C:nucleus"/>
    <property type="evidence" value="ECO:0007669"/>
    <property type="project" value="UniProtKB-SubCell"/>
</dbReference>
<dbReference type="GO" id="GO:0061957">
    <property type="term" value="C:NVT complex"/>
    <property type="evidence" value="ECO:0007669"/>
    <property type="project" value="EnsemblFungi"/>
</dbReference>
<dbReference type="GO" id="GO:0004177">
    <property type="term" value="F:aminopeptidase activity"/>
    <property type="evidence" value="ECO:0000250"/>
    <property type="project" value="UniProtKB"/>
</dbReference>
<dbReference type="GO" id="GO:0004301">
    <property type="term" value="F:epoxide hydrolase activity"/>
    <property type="evidence" value="ECO:0000250"/>
    <property type="project" value="UniProtKB"/>
</dbReference>
<dbReference type="GO" id="GO:0008237">
    <property type="term" value="F:metallopeptidase activity"/>
    <property type="evidence" value="ECO:0007669"/>
    <property type="project" value="UniProtKB-KW"/>
</dbReference>
<dbReference type="GO" id="GO:0008270">
    <property type="term" value="F:zinc ion binding"/>
    <property type="evidence" value="ECO:0000250"/>
    <property type="project" value="UniProtKB"/>
</dbReference>
<dbReference type="GO" id="GO:0120113">
    <property type="term" value="P:cytoplasm to vacuole targeting by the NVT pathway"/>
    <property type="evidence" value="ECO:0007669"/>
    <property type="project" value="EnsemblFungi"/>
</dbReference>
<dbReference type="GO" id="GO:0006629">
    <property type="term" value="P:lipid metabolic process"/>
    <property type="evidence" value="ECO:0007669"/>
    <property type="project" value="EnsemblFungi"/>
</dbReference>
<dbReference type="GO" id="GO:0043171">
    <property type="term" value="P:peptide catabolic process"/>
    <property type="evidence" value="ECO:0000250"/>
    <property type="project" value="UniProtKB"/>
</dbReference>
<dbReference type="GO" id="GO:0030163">
    <property type="term" value="P:protein catabolic process"/>
    <property type="evidence" value="ECO:0007669"/>
    <property type="project" value="EnsemblFungi"/>
</dbReference>
<dbReference type="GO" id="GO:0006508">
    <property type="term" value="P:proteolysis"/>
    <property type="evidence" value="ECO:0007669"/>
    <property type="project" value="UniProtKB-KW"/>
</dbReference>
<dbReference type="CDD" id="cd09599">
    <property type="entry name" value="M1_LTA4H"/>
    <property type="match status" value="1"/>
</dbReference>
<dbReference type="FunFam" id="1.10.390.10:FF:000009">
    <property type="entry name" value="Leukotriene A(4) hydrolase"/>
    <property type="match status" value="1"/>
</dbReference>
<dbReference type="FunFam" id="1.25.40.320:FF:000001">
    <property type="entry name" value="Leukotriene A(4) hydrolase"/>
    <property type="match status" value="1"/>
</dbReference>
<dbReference type="FunFam" id="2.60.40.1730:FF:000004">
    <property type="entry name" value="Leukotriene A(4) hydrolase"/>
    <property type="match status" value="1"/>
</dbReference>
<dbReference type="FunFam" id="3.30.2010.30:FF:000001">
    <property type="entry name" value="Leukotriene A(4) hydrolase"/>
    <property type="match status" value="1"/>
</dbReference>
<dbReference type="Gene3D" id="3.30.2010.30">
    <property type="match status" value="1"/>
</dbReference>
<dbReference type="Gene3D" id="1.10.390.10">
    <property type="entry name" value="Neutral Protease Domain 2"/>
    <property type="match status" value="1"/>
</dbReference>
<dbReference type="Gene3D" id="1.25.40.320">
    <property type="entry name" value="Peptidase M1, leukotriene A4 hydrolase/aminopeptidase C-terminal domain"/>
    <property type="match status" value="1"/>
</dbReference>
<dbReference type="Gene3D" id="2.60.40.1730">
    <property type="entry name" value="tricorn interacting facor f3 domain"/>
    <property type="match status" value="1"/>
</dbReference>
<dbReference type="InterPro" id="IPR045357">
    <property type="entry name" value="Aminopeptidase_N-like_N"/>
</dbReference>
<dbReference type="InterPro" id="IPR042097">
    <property type="entry name" value="Aminopeptidase_N-like_N_sf"/>
</dbReference>
<dbReference type="InterPro" id="IPR016024">
    <property type="entry name" value="ARM-type_fold"/>
</dbReference>
<dbReference type="InterPro" id="IPR012777">
    <property type="entry name" value="LTA4H"/>
</dbReference>
<dbReference type="InterPro" id="IPR049980">
    <property type="entry name" value="LTA4H_cat"/>
</dbReference>
<dbReference type="InterPro" id="IPR038502">
    <property type="entry name" value="M1_LTA-4_hydro/amino_C_sf"/>
</dbReference>
<dbReference type="InterPro" id="IPR034015">
    <property type="entry name" value="M1_LTA4H"/>
</dbReference>
<dbReference type="InterPro" id="IPR001930">
    <property type="entry name" value="Peptidase_M1"/>
</dbReference>
<dbReference type="InterPro" id="IPR015211">
    <property type="entry name" value="Peptidase_M1_C"/>
</dbReference>
<dbReference type="InterPro" id="IPR014782">
    <property type="entry name" value="Peptidase_M1_dom"/>
</dbReference>
<dbReference type="InterPro" id="IPR027268">
    <property type="entry name" value="Peptidase_M4/M1_CTD_sf"/>
</dbReference>
<dbReference type="NCBIfam" id="TIGR02411">
    <property type="entry name" value="leuko_A4_hydro"/>
    <property type="match status" value="1"/>
</dbReference>
<dbReference type="PANTHER" id="PTHR45726">
    <property type="entry name" value="LEUKOTRIENE A-4 HYDROLASE"/>
    <property type="match status" value="1"/>
</dbReference>
<dbReference type="PANTHER" id="PTHR45726:SF3">
    <property type="entry name" value="LEUKOTRIENE A-4 HYDROLASE"/>
    <property type="match status" value="1"/>
</dbReference>
<dbReference type="Pfam" id="PF09127">
    <property type="entry name" value="Leuk-A4-hydro_C"/>
    <property type="match status" value="1"/>
</dbReference>
<dbReference type="Pfam" id="PF01433">
    <property type="entry name" value="Peptidase_M1"/>
    <property type="match status" value="1"/>
</dbReference>
<dbReference type="Pfam" id="PF17900">
    <property type="entry name" value="Peptidase_M1_N"/>
    <property type="match status" value="1"/>
</dbReference>
<dbReference type="PRINTS" id="PR00756">
    <property type="entry name" value="ALADIPTASE"/>
</dbReference>
<dbReference type="SMART" id="SM01263">
    <property type="entry name" value="Leuk-A4-hydro_C"/>
    <property type="match status" value="1"/>
</dbReference>
<dbReference type="SUPFAM" id="SSF48371">
    <property type="entry name" value="ARM repeat"/>
    <property type="match status" value="1"/>
</dbReference>
<dbReference type="SUPFAM" id="SSF63737">
    <property type="entry name" value="Leukotriene A4 hydrolase N-terminal domain"/>
    <property type="match status" value="1"/>
</dbReference>
<dbReference type="SUPFAM" id="SSF55486">
    <property type="entry name" value="Metalloproteases ('zincins'), catalytic domain"/>
    <property type="match status" value="1"/>
</dbReference>
<dbReference type="PROSITE" id="PS00142">
    <property type="entry name" value="ZINC_PROTEASE"/>
    <property type="match status" value="1"/>
</dbReference>
<evidence type="ECO:0000250" key="1">
    <source>
        <dbReference type="UniProtKB" id="P09960"/>
    </source>
</evidence>
<evidence type="ECO:0000250" key="2">
    <source>
        <dbReference type="UniProtKB" id="Q10740"/>
    </source>
</evidence>
<evidence type="ECO:0000255" key="3">
    <source>
        <dbReference type="PROSITE-ProRule" id="PRU10095"/>
    </source>
</evidence>
<evidence type="ECO:0000305" key="4"/>
<feature type="chain" id="PRO_0000324925" description="Leucine aminopeptidase 2">
    <location>
        <begin position="1"/>
        <end position="652"/>
    </location>
</feature>
<feature type="active site" description="Proton acceptor" evidence="3">
    <location>
        <position position="323"/>
    </location>
</feature>
<feature type="active site" description="Proton donor" evidence="3">
    <location>
        <position position="411"/>
    </location>
</feature>
<feature type="binding site" evidence="1">
    <location>
        <begin position="165"/>
        <end position="167"/>
    </location>
    <ligand>
        <name>a peptide</name>
        <dbReference type="ChEBI" id="CHEBI:60466"/>
    </ligand>
</feature>
<feature type="binding site" evidence="1">
    <location>
        <begin position="293"/>
        <end position="298"/>
    </location>
    <ligand>
        <name>a peptide</name>
        <dbReference type="ChEBI" id="CHEBI:60466"/>
    </ligand>
</feature>
<feature type="binding site" evidence="3">
    <location>
        <position position="322"/>
    </location>
    <ligand>
        <name>Zn(2+)</name>
        <dbReference type="ChEBI" id="CHEBI:29105"/>
        <note>catalytic</note>
    </ligand>
</feature>
<feature type="binding site" evidence="3">
    <location>
        <position position="326"/>
    </location>
    <ligand>
        <name>Zn(2+)</name>
        <dbReference type="ChEBI" id="CHEBI:29105"/>
        <note>catalytic</note>
    </ligand>
</feature>
<feature type="binding site" evidence="3">
    <location>
        <position position="345"/>
    </location>
    <ligand>
        <name>Zn(2+)</name>
        <dbReference type="ChEBI" id="CHEBI:29105"/>
        <note>catalytic</note>
    </ligand>
</feature>